<dbReference type="EMBL" id="V00430">
    <property type="protein sequence ID" value="CAA23712.1"/>
    <property type="molecule type" value="mRNA"/>
</dbReference>
<dbReference type="EMBL" id="J02714">
    <property type="protein sequence ID" value="AAA48972.1"/>
    <property type="molecule type" value="Genomic_DNA"/>
</dbReference>
<dbReference type="PIR" id="A29320">
    <property type="entry name" value="A29320"/>
</dbReference>
<dbReference type="SMR" id="P02565"/>
<dbReference type="FunCoup" id="P02565">
    <property type="interactions" value="64"/>
</dbReference>
<dbReference type="STRING" id="9031.ENSGALP00000041897"/>
<dbReference type="iPTMnet" id="P02565"/>
<dbReference type="PaxDb" id="9031-ENSGALP00000041897"/>
<dbReference type="VEuPathDB" id="HostDB:geneid_417306"/>
<dbReference type="eggNOG" id="KOG0161">
    <property type="taxonomic scope" value="Eukaryota"/>
</dbReference>
<dbReference type="InParanoid" id="P02565"/>
<dbReference type="OrthoDB" id="312459at2759"/>
<dbReference type="PhylomeDB" id="P02565"/>
<dbReference type="Proteomes" id="UP000000539">
    <property type="component" value="Unassembled WGS sequence"/>
</dbReference>
<dbReference type="GO" id="GO:0005737">
    <property type="term" value="C:cytoplasm"/>
    <property type="evidence" value="ECO:0000318"/>
    <property type="project" value="GO_Central"/>
</dbReference>
<dbReference type="GO" id="GO:0030016">
    <property type="term" value="C:myofibril"/>
    <property type="evidence" value="ECO:0007669"/>
    <property type="project" value="UniProtKB-SubCell"/>
</dbReference>
<dbReference type="GO" id="GO:0032982">
    <property type="term" value="C:myosin filament"/>
    <property type="evidence" value="ECO:0000318"/>
    <property type="project" value="GO_Central"/>
</dbReference>
<dbReference type="GO" id="GO:0016460">
    <property type="term" value="C:myosin II complex"/>
    <property type="evidence" value="ECO:0000318"/>
    <property type="project" value="GO_Central"/>
</dbReference>
<dbReference type="GO" id="GO:0051015">
    <property type="term" value="F:actin filament binding"/>
    <property type="evidence" value="ECO:0000318"/>
    <property type="project" value="GO_Central"/>
</dbReference>
<dbReference type="GO" id="GO:0005524">
    <property type="term" value="F:ATP binding"/>
    <property type="evidence" value="ECO:0007669"/>
    <property type="project" value="UniProtKB-KW"/>
</dbReference>
<dbReference type="GO" id="GO:0005516">
    <property type="term" value="F:calmodulin binding"/>
    <property type="evidence" value="ECO:0007669"/>
    <property type="project" value="UniProtKB-KW"/>
</dbReference>
<dbReference type="GO" id="GO:0000146">
    <property type="term" value="F:microfilament motor activity"/>
    <property type="evidence" value="ECO:0000318"/>
    <property type="project" value="GO_Central"/>
</dbReference>
<dbReference type="GO" id="GO:0006936">
    <property type="term" value="P:muscle contraction"/>
    <property type="evidence" value="ECO:0000318"/>
    <property type="project" value="GO_Central"/>
</dbReference>
<dbReference type="FunFam" id="1.10.10.820:FF:000001">
    <property type="entry name" value="Myosin heavy chain"/>
    <property type="match status" value="1"/>
</dbReference>
<dbReference type="FunFam" id="1.20.5.340:FF:000002">
    <property type="entry name" value="Myosin heavy chain"/>
    <property type="match status" value="1"/>
</dbReference>
<dbReference type="FunFam" id="1.20.5.340:FF:000003">
    <property type="entry name" value="Myosin heavy chain"/>
    <property type="match status" value="1"/>
</dbReference>
<dbReference type="FunFam" id="1.20.5.340:FF:000004">
    <property type="entry name" value="Myosin heavy chain"/>
    <property type="match status" value="1"/>
</dbReference>
<dbReference type="FunFam" id="1.20.5.340:FF:000006">
    <property type="entry name" value="Myosin heavy chain"/>
    <property type="match status" value="1"/>
</dbReference>
<dbReference type="FunFam" id="1.20.5.340:FF:000013">
    <property type="entry name" value="Myosin heavy chain"/>
    <property type="match status" value="1"/>
</dbReference>
<dbReference type="FunFam" id="1.20.5.370:FF:000001">
    <property type="entry name" value="Myosin heavy chain"/>
    <property type="match status" value="1"/>
</dbReference>
<dbReference type="FunFam" id="1.20.5.370:FF:000002">
    <property type="entry name" value="Myosin heavy chain"/>
    <property type="match status" value="1"/>
</dbReference>
<dbReference type="FunFam" id="1.20.5.370:FF:000003">
    <property type="entry name" value="Myosin heavy chain"/>
    <property type="match status" value="1"/>
</dbReference>
<dbReference type="FunFam" id="1.20.5.370:FF:000007">
    <property type="entry name" value="Myosin heavy chain"/>
    <property type="match status" value="1"/>
</dbReference>
<dbReference type="FunFam" id="1.20.5.370:FF:000008">
    <property type="entry name" value="Myosin heavy chain"/>
    <property type="match status" value="1"/>
</dbReference>
<dbReference type="FunFam" id="1.20.5.4820:FF:000001">
    <property type="entry name" value="Myosin heavy chain"/>
    <property type="match status" value="1"/>
</dbReference>
<dbReference type="FunFam" id="1.20.58.530:FF:000001">
    <property type="entry name" value="Myosin heavy chain"/>
    <property type="match status" value="1"/>
</dbReference>
<dbReference type="FunFam" id="2.30.30.360:FF:000001">
    <property type="entry name" value="Myosin heavy chain"/>
    <property type="match status" value="1"/>
</dbReference>
<dbReference type="FunFam" id="3.40.850.10:FF:000024">
    <property type="entry name" value="Myosin heavy chain, isoform J"/>
    <property type="match status" value="1"/>
</dbReference>
<dbReference type="FunFam" id="1.20.120.720:FF:000001">
    <property type="entry name" value="Myosin heavy chain, muscle"/>
    <property type="match status" value="1"/>
</dbReference>
<dbReference type="Gene3D" id="1.10.10.820">
    <property type="match status" value="1"/>
</dbReference>
<dbReference type="Gene3D" id="1.20.5.340">
    <property type="match status" value="5"/>
</dbReference>
<dbReference type="Gene3D" id="1.20.5.370">
    <property type="match status" value="4"/>
</dbReference>
<dbReference type="Gene3D" id="1.20.5.4820">
    <property type="match status" value="1"/>
</dbReference>
<dbReference type="Gene3D" id="1.20.58.530">
    <property type="match status" value="1"/>
</dbReference>
<dbReference type="Gene3D" id="6.10.250.2420">
    <property type="match status" value="1"/>
</dbReference>
<dbReference type="Gene3D" id="3.40.850.10">
    <property type="entry name" value="Kinesin motor domain"/>
    <property type="match status" value="1"/>
</dbReference>
<dbReference type="Gene3D" id="2.30.30.360">
    <property type="entry name" value="Myosin S1 fragment, N-terminal"/>
    <property type="match status" value="1"/>
</dbReference>
<dbReference type="Gene3D" id="1.20.120.720">
    <property type="entry name" value="Myosin VI head, motor domain, U50 subdomain"/>
    <property type="match status" value="1"/>
</dbReference>
<dbReference type="InterPro" id="IPR036961">
    <property type="entry name" value="Kinesin_motor_dom_sf"/>
</dbReference>
<dbReference type="InterPro" id="IPR001609">
    <property type="entry name" value="Myosin_head_motor_dom-like"/>
</dbReference>
<dbReference type="InterPro" id="IPR004009">
    <property type="entry name" value="Myosin_N"/>
</dbReference>
<dbReference type="InterPro" id="IPR008989">
    <property type="entry name" value="Myosin_S1_N"/>
</dbReference>
<dbReference type="InterPro" id="IPR002928">
    <property type="entry name" value="Myosin_tail"/>
</dbReference>
<dbReference type="InterPro" id="IPR027417">
    <property type="entry name" value="P-loop_NTPase"/>
</dbReference>
<dbReference type="InterPro" id="IPR014751">
    <property type="entry name" value="XRCC4-like_C"/>
</dbReference>
<dbReference type="PANTHER" id="PTHR45615">
    <property type="entry name" value="MYOSIN HEAVY CHAIN, NON-MUSCLE"/>
    <property type="match status" value="1"/>
</dbReference>
<dbReference type="PANTHER" id="PTHR45615:SF79">
    <property type="entry name" value="MYOSIN-4"/>
    <property type="match status" value="1"/>
</dbReference>
<dbReference type="Pfam" id="PF00063">
    <property type="entry name" value="Myosin_head"/>
    <property type="match status" value="1"/>
</dbReference>
<dbReference type="Pfam" id="PF02736">
    <property type="entry name" value="Myosin_N"/>
    <property type="match status" value="1"/>
</dbReference>
<dbReference type="Pfam" id="PF01576">
    <property type="entry name" value="Myosin_tail_1"/>
    <property type="match status" value="1"/>
</dbReference>
<dbReference type="PRINTS" id="PR00193">
    <property type="entry name" value="MYOSINHEAVY"/>
</dbReference>
<dbReference type="SMART" id="SM00242">
    <property type="entry name" value="MYSc"/>
    <property type="match status" value="1"/>
</dbReference>
<dbReference type="SUPFAM" id="SSF90257">
    <property type="entry name" value="Myosin rod fragments"/>
    <property type="match status" value="5"/>
</dbReference>
<dbReference type="SUPFAM" id="SSF52540">
    <property type="entry name" value="P-loop containing nucleoside triphosphate hydrolases"/>
    <property type="match status" value="1"/>
</dbReference>
<dbReference type="SUPFAM" id="SSF57997">
    <property type="entry name" value="Tropomyosin"/>
    <property type="match status" value="1"/>
</dbReference>
<dbReference type="PROSITE" id="PS50096">
    <property type="entry name" value="IQ"/>
    <property type="match status" value="1"/>
</dbReference>
<dbReference type="PROSITE" id="PS51456">
    <property type="entry name" value="MYOSIN_MOTOR"/>
    <property type="match status" value="1"/>
</dbReference>
<dbReference type="PROSITE" id="PS51844">
    <property type="entry name" value="SH3_LIKE"/>
    <property type="match status" value="1"/>
</dbReference>
<protein>
    <recommendedName>
        <fullName>Myosin-1B</fullName>
    </recommendedName>
    <alternativeName>
        <fullName>Myosin heavy chain 1B, skeletal muscle</fullName>
    </alternativeName>
    <alternativeName>
        <fullName>Myosin heavy chain 3</fullName>
        <shortName>Myosin-3</shortName>
    </alternativeName>
    <alternativeName>
        <fullName>Myosin heavy chain, fast skeletal muscle, embryonic</fullName>
    </alternativeName>
</protein>
<evidence type="ECO:0000255" key="1"/>
<evidence type="ECO:0000255" key="2">
    <source>
        <dbReference type="PROSITE-ProRule" id="PRU00116"/>
    </source>
</evidence>
<evidence type="ECO:0000255" key="3">
    <source>
        <dbReference type="PROSITE-ProRule" id="PRU00782"/>
    </source>
</evidence>
<evidence type="ECO:0000255" key="4">
    <source>
        <dbReference type="PROSITE-ProRule" id="PRU01190"/>
    </source>
</evidence>
<evidence type="ECO:0000256" key="5">
    <source>
        <dbReference type="SAM" id="MobiDB-lite"/>
    </source>
</evidence>
<evidence type="ECO:0000305" key="6"/>
<sequence length="1940" mass="222817">MATDADMAIFGEAAPYLRKSEKERIEAQNKPFDAKSSVFVVHAKESYVKSTIQSKESGKVTVKTEGGETLTVKEDQIFSMNPPKYDKIEDMAMMTHLHEPAVLYNLKERYAAWMIYTYSGLFCVTVNPYKWLPVYNPEVVLAYRGKKRQEAPPHIFSISDNAYQFMLTDRENQSILITGESGAGKTVNTKRVIQYFATIAASGDKKKEEQPAGKMQGTLEDQIISANPLLEAFGNAKTVRNDNSSRFGKFIRIHFGATGKLASADIETYLLEKSRVTFQLKAERSYHIFYQIMSNKKPELIEMLLITTNPYDYQYVSQGEITVPSINDQEELMATDSAIDILGFTPDEKTAIYKLTGAVMHYGNLKFKQKQREEQAEPGGTEVADKAAYLMGLNSADLLKALCYPRVKVGNEYVTKGQTVQQVYNSVGALAKSVFEKMFLWMVVRINQQLDTKQPRQYFIGVLDIAGFEIFDFNSLEQLCINFTNEKLQQFFNHHMFVLEQEEYKKEGIEWEFIDFGMDLAACIELIEKPMGIFSILEEECMFPKATDTSFKNKLYDQHLGKSNNFQKPKPGKGKAEAHFSLVHYAGTVDYNITGWLEKNKDPLNETVVGLYQKSSLKTLALLFASVGGAEAESGAGGKKGGKKKGSSFQTVSALFRENLNKLMSNLRSTHPHFVRCLIPNETKTPGAMEHELVLHQLRCNGVLEGIRICRKGFPIRILYADFKQRYKVLNASAIPEGQFIDSKKASEKLLGSIDVDHTQYKFGHTKVFFKAGLLGLLEEMRDEKLAQLITRTQARCRGFLMRVEFKKMMERRESIFCIQYNVRAFMNVKHWPWMKLFFKIKPLLKSAESEKEMANMKEEFEKTKEELAKSEAKRKELEEKMVSLLQEKNDLQLQVQAEADGLADAEERCDQLIKTKIQLEAKIKELTERAEDEEEMNAELTAKKRKLEDECSELKKDIDDLELTLAKVEKEKHATENKVKNLTEEMAALDETIAKLTKEKKALQEAHQQTLDDLQAEEDKVNTLTKAKTKLEQQVDDLEGSLEQEKKLRMDLERAKRKLEGDLKMTQESTMDLENDKQQLDEKLKKKDFEISQIQSKIEDEQALGMQLQKKIKELQARIEELEEEIEAERTSRAKAEKHRADLSRELEEISERLEEAGGATAAQIDMNKKREAEFQKMRRDLEEATLQHEATAAALRKKHADSTADVGEQIDNLQRVKQKLEKEKSELKMEIDDLASNMESVSKAKANLEKMCRSLEDQLSEIKTKEEEQQRTINDISAQKARLQTESGEYSRQVEEKDALISQLSRGKQAFTQQIEELKRHLEEEIKAKKCPAHALQSARHDCDLLREQYEEEQEAKGELQRALSKANSEVAQWRTKYETDAIQRTEELEEAKKKLAQRLQDAEEHVEAVNSKCASLEKTKQRLQNEVEDLMIDVERSNAACAALDKKQKNFDKILSEWKQKYEETQAELEASQKESRSLSTELFKMKNAYEESLDHLETLKRENKNLQQEISDLTEQIAEGGKAIHELEKVKKQIEQEKSELQTALEEAEASLEHEEGKILRVQLELNQVKSDIDRKIAEKDEEIDQLKRNHLRVVDSMQSTLDAEIRSRNEALRLKKKMEGDLNEIEIQLSHANRQAAEAQKNLRNTQGVLKDTQIHLDDALRSQEDLKEQVAMVERRANLLQAEIEELRAALEQTERSRKVAEQELLDASERVQLLHTQNTSLINTKKKLESDISQIQSEMEDTIQEARNAEEKAKKAITDAAMMAEELKKEQDTSAHLERMKKNLDQTVKDLQHRLDEAEQLALKGGKKQIQKLEARVRELEGEVDAEQKRSAEAVKGVRKYERRVKELTYQSEEDRKNVLRLQDLVDKLQMKVKSYKRQAEEAEELSNVNLSKFRKIQHELEEAEERADIAESQVNKLRAKSREIGKKAESEE</sequence>
<name>MYH1B_CHICK</name>
<organism>
    <name type="scientific">Gallus gallus</name>
    <name type="common">Chicken</name>
    <dbReference type="NCBI Taxonomy" id="9031"/>
    <lineage>
        <taxon>Eukaryota</taxon>
        <taxon>Metazoa</taxon>
        <taxon>Chordata</taxon>
        <taxon>Craniata</taxon>
        <taxon>Vertebrata</taxon>
        <taxon>Euteleostomi</taxon>
        <taxon>Archelosauria</taxon>
        <taxon>Archosauria</taxon>
        <taxon>Dinosauria</taxon>
        <taxon>Saurischia</taxon>
        <taxon>Theropoda</taxon>
        <taxon>Coelurosauria</taxon>
        <taxon>Aves</taxon>
        <taxon>Neognathae</taxon>
        <taxon>Galloanserae</taxon>
        <taxon>Galliformes</taxon>
        <taxon>Phasianidae</taxon>
        <taxon>Phasianinae</taxon>
        <taxon>Gallus</taxon>
    </lineage>
</organism>
<keyword id="KW-0009">Actin-binding</keyword>
<keyword id="KW-0067">ATP-binding</keyword>
<keyword id="KW-0112">Calmodulin-binding</keyword>
<keyword id="KW-0175">Coiled coil</keyword>
<keyword id="KW-0963">Cytoplasm</keyword>
<keyword id="KW-0488">Methylation</keyword>
<keyword id="KW-0505">Motor protein</keyword>
<keyword id="KW-0514">Muscle protein</keyword>
<keyword id="KW-0518">Myosin</keyword>
<keyword id="KW-0547">Nucleotide-binding</keyword>
<keyword id="KW-1185">Reference proteome</keyword>
<keyword id="KW-0787">Thick filament</keyword>
<proteinExistence type="evidence at transcript level"/>
<comment type="function">
    <text>Muscle contraction.</text>
</comment>
<comment type="subunit">
    <text>Muscle myosin is a hexameric protein that consists of 2 heavy chain subunits (MHC), 2 alkali light chain subunits (MLC) and 2 regulatory light chain subunits (MLC-2).</text>
</comment>
<comment type="subcellular location">
    <subcellularLocation>
        <location>Cytoplasm</location>
        <location>Myofibril</location>
    </subcellularLocation>
    <text>Thick filaments of the myofibrils.</text>
</comment>
<comment type="domain">
    <text>The rodlike tail sequence is highly repetitive, showing cycles of a 28-residue repeat pattern composed of 4 heptapeptides, characteristic for alpha-helical coiled coils.</text>
</comment>
<comment type="domain">
    <text evidence="6">Limited proteolysis of myosin heavy chain produces 1 light meromyosin (LMM) and 1 heavy meromyosin (HMM). HMM can be further cleaved into 2 globular subfragments (S1) and 1 rod-shaped subfragment (S2).</text>
</comment>
<comment type="similarity">
    <text evidence="6">Belongs to the TRAFAC class myosin-kinesin ATPase superfamily. Myosin family.</text>
</comment>
<feature type="chain" id="PRO_0000123397" description="Myosin-1B">
    <location>
        <begin position="1"/>
        <end position="1940"/>
    </location>
</feature>
<feature type="domain" description="Myosin N-terminal SH3-like" evidence="4">
    <location>
        <begin position="33"/>
        <end position="82"/>
    </location>
</feature>
<feature type="domain" description="Myosin motor" evidence="3">
    <location>
        <begin position="86"/>
        <end position="783"/>
    </location>
</feature>
<feature type="domain" description="IQ" evidence="2">
    <location>
        <begin position="786"/>
        <end position="815"/>
    </location>
</feature>
<feature type="region of interest" description="Actin-binding">
    <location>
        <begin position="660"/>
        <end position="682"/>
    </location>
</feature>
<feature type="region of interest" description="Actin-binding">
    <location>
        <begin position="762"/>
        <end position="776"/>
    </location>
</feature>
<feature type="region of interest" description="Disordered" evidence="5">
    <location>
        <begin position="1912"/>
        <end position="1940"/>
    </location>
</feature>
<feature type="coiled-coil region" evidence="1">
    <location>
        <begin position="844"/>
        <end position="1940"/>
    </location>
</feature>
<feature type="compositionally biased region" description="Basic and acidic residues" evidence="5">
    <location>
        <begin position="1928"/>
        <end position="1940"/>
    </location>
</feature>
<feature type="binding site">
    <location>
        <begin position="179"/>
        <end position="186"/>
    </location>
    <ligand>
        <name>ATP</name>
        <dbReference type="ChEBI" id="CHEBI:30616"/>
    </ligand>
</feature>
<feature type="modified residue" description="N6,N6,N6-trimethyllysine" evidence="1">
    <location>
        <position position="130"/>
    </location>
</feature>
<feature type="sequence variant">
    <original>G</original>
    <variation>D</variation>
    <location>
        <position position="379"/>
    </location>
</feature>
<feature type="sequence conflict" description="In Ref. 2; CAA23712." evidence="6" ref="2">
    <original>T</original>
    <variation>A</variation>
    <location>
        <position position="1547"/>
    </location>
</feature>
<feature type="sequence conflict" description="In Ref. 2; CAA23712." evidence="6" ref="2">
    <original>ERA</original>
    <variation>GRT</variation>
    <location>
        <begin position="1913"/>
        <end position="1915"/>
    </location>
</feature>
<accession>P02565</accession>
<gene>
    <name type="primary">MYH1B</name>
    <name type="synonym">MYH3</name>
</gene>
<reference key="1">
    <citation type="journal article" date="1987" name="J. Biol. Chem.">
        <title>The sequence of an embryonic myosin heavy chain gene and isolation of its corresponding cDNA.</title>
        <authorList>
            <person name="Molina M.I."/>
            <person name="Kropp K.E."/>
            <person name="Gulick J."/>
            <person name="Robbins J."/>
        </authorList>
    </citation>
    <scope>NUCLEOTIDE SEQUENCE [GENOMIC DNA]</scope>
</reference>
<reference key="2">
    <citation type="journal article" date="1983" name="J. Biol. Chem.">
        <title>Cloned mRNA sequences for two types of embryonic myosin heavy chains from chick skeletal muscle. I. DNA and derived amino acid sequence of light meromyosin.</title>
        <authorList>
            <person name="Kavinsky C.J."/>
            <person name="Umeda P.K."/>
            <person name="Sinha A.M."/>
            <person name="Elzinga M."/>
            <person name="Tong S.W."/>
            <person name="Zak R."/>
            <person name="Jakovcic S."/>
            <person name="Rabinowitz M."/>
        </authorList>
    </citation>
    <scope>NUCLEOTIDE SEQUENCE [MRNA] OF 1502-1940</scope>
</reference>
<reference key="3">
    <citation type="journal article" date="1985" name="J. Biol. Chem.">
        <title>The structure of two fast-white myosin heavy chain promoters. A comparative study.</title>
        <authorList>
            <person name="Gulick J."/>
            <person name="Kropp K."/>
            <person name="Robbins J."/>
        </authorList>
    </citation>
    <scope>PARTIAL NUCLEOTIDE SEQUENCE [GENOMIC DNA]</scope>
</reference>